<proteinExistence type="inferred from homology"/>
<gene>
    <name evidence="1" type="primary">gcvPB</name>
    <name type="ordered locus">TM_0214</name>
</gene>
<keyword id="KW-0560">Oxidoreductase</keyword>
<keyword id="KW-0663">Pyridoxal phosphate</keyword>
<keyword id="KW-1185">Reference proteome</keyword>
<sequence length="474" mass="53468">MTIFERSKKGRKAFRLPESDIPEYSLPDRFLRRTPPELPEVSEPDLVRHYTNLARKNYSVDLGIYPLGSCTMKYNPKLNEKAANLEGFREIHPYQPVETVQGSLRLMYELKKMLCEITGMDDMTLQPAAGAHGELTGMLIVREYFKNRGDTGRKKVLVPDSAHGTNPASASMVGFEVVEIKSKNGMVDVEDLKKLLDEEVAAVMLTNPNTLGLFEKDILKIAEMTHECGALLYYDGANLNAIMGKVRPGDMGFDIVHLNLHKTFSTPHGMGGPGSGPVGVKKHLVDFLPFPQVKKNGELYELFVPEKTIGRVRSFFGNFPVLVKAYTYILTMGRDGLERVSEMAVLNANYLKKKIEKFLEIPYNGFCMHEFVASAEKVFRETGVRTLDIAKRILDFGVHPPTVYFPLIVPEALMIEPTETENKETLDKYAEILERVVKEAYENPDALKNAPHNTPVRRVNEVLASKKPVFRWRG</sequence>
<comment type="function">
    <text evidence="1">The glycine cleavage system catalyzes the degradation of glycine. The P protein binds the alpha-amino group of glycine through its pyridoxal phosphate cofactor; CO(2) is released and the remaining methylamine moiety is then transferred to the lipoamide cofactor of the H protein.</text>
</comment>
<comment type="catalytic activity">
    <reaction evidence="1">
        <text>N(6)-[(R)-lipoyl]-L-lysyl-[glycine-cleavage complex H protein] + glycine + H(+) = N(6)-[(R)-S(8)-aminomethyldihydrolipoyl]-L-lysyl-[glycine-cleavage complex H protein] + CO2</text>
        <dbReference type="Rhea" id="RHEA:24304"/>
        <dbReference type="Rhea" id="RHEA-COMP:10494"/>
        <dbReference type="Rhea" id="RHEA-COMP:10495"/>
        <dbReference type="ChEBI" id="CHEBI:15378"/>
        <dbReference type="ChEBI" id="CHEBI:16526"/>
        <dbReference type="ChEBI" id="CHEBI:57305"/>
        <dbReference type="ChEBI" id="CHEBI:83099"/>
        <dbReference type="ChEBI" id="CHEBI:83143"/>
        <dbReference type="EC" id="1.4.4.2"/>
    </reaction>
</comment>
<comment type="cofactor">
    <cofactor evidence="1">
        <name>pyridoxal 5'-phosphate</name>
        <dbReference type="ChEBI" id="CHEBI:597326"/>
    </cofactor>
</comment>
<comment type="subunit">
    <text evidence="1">The glycine cleavage system is composed of four proteins: P, T, L and H. In this organism, the P 'protein' is a heterodimer of two subunits.</text>
</comment>
<comment type="similarity">
    <text evidence="1">Belongs to the GcvP family. C-terminal subunit subfamily.</text>
</comment>
<name>GCSPB_THEMA</name>
<evidence type="ECO:0000255" key="1">
    <source>
        <dbReference type="HAMAP-Rule" id="MF_00713"/>
    </source>
</evidence>
<protein>
    <recommendedName>
        <fullName evidence="1">Probable glycine dehydrogenase (decarboxylating) subunit 2</fullName>
        <ecNumber evidence="1">1.4.4.2</ecNumber>
    </recommendedName>
    <alternativeName>
        <fullName evidence="1">Glycine cleavage system P-protein subunit 2</fullName>
    </alternativeName>
    <alternativeName>
        <fullName evidence="1">Glycine decarboxylase subunit 2</fullName>
    </alternativeName>
    <alternativeName>
        <fullName evidence="1">Glycine dehydrogenase (aminomethyl-transferring) subunit 2</fullName>
    </alternativeName>
</protein>
<reference key="1">
    <citation type="journal article" date="1999" name="Nature">
        <title>Evidence for lateral gene transfer between Archaea and Bacteria from genome sequence of Thermotoga maritima.</title>
        <authorList>
            <person name="Nelson K.E."/>
            <person name="Clayton R.A."/>
            <person name="Gill S.R."/>
            <person name="Gwinn M.L."/>
            <person name="Dodson R.J."/>
            <person name="Haft D.H."/>
            <person name="Hickey E.K."/>
            <person name="Peterson J.D."/>
            <person name="Nelson W.C."/>
            <person name="Ketchum K.A."/>
            <person name="McDonald L.A."/>
            <person name="Utterback T.R."/>
            <person name="Malek J.A."/>
            <person name="Linher K.D."/>
            <person name="Garrett M.M."/>
            <person name="Stewart A.M."/>
            <person name="Cotton M.D."/>
            <person name="Pratt M.S."/>
            <person name="Phillips C.A."/>
            <person name="Richardson D.L."/>
            <person name="Heidelberg J.F."/>
            <person name="Sutton G.G."/>
            <person name="Fleischmann R.D."/>
            <person name="Eisen J.A."/>
            <person name="White O."/>
            <person name="Salzberg S.L."/>
            <person name="Smith H.O."/>
            <person name="Venter J.C."/>
            <person name="Fraser C.M."/>
        </authorList>
    </citation>
    <scope>NUCLEOTIDE SEQUENCE [LARGE SCALE GENOMIC DNA]</scope>
    <source>
        <strain>ATCC 43589 / DSM 3109 / JCM 10099 / NBRC 100826 / MSB8</strain>
    </source>
</reference>
<feature type="chain" id="PRO_0000167021" description="Probable glycine dehydrogenase (decarboxylating) subunit 2">
    <location>
        <begin position="1"/>
        <end position="474"/>
    </location>
</feature>
<feature type="modified residue" description="N6-(pyridoxal phosphate)lysine" evidence="1">
    <location>
        <position position="262"/>
    </location>
</feature>
<organism>
    <name type="scientific">Thermotoga maritima (strain ATCC 43589 / DSM 3109 / JCM 10099 / NBRC 100826 / MSB8)</name>
    <dbReference type="NCBI Taxonomy" id="243274"/>
    <lineage>
        <taxon>Bacteria</taxon>
        <taxon>Thermotogati</taxon>
        <taxon>Thermotogota</taxon>
        <taxon>Thermotogae</taxon>
        <taxon>Thermotogales</taxon>
        <taxon>Thermotogaceae</taxon>
        <taxon>Thermotoga</taxon>
    </lineage>
</organism>
<accession>Q9WY57</accession>
<dbReference type="EC" id="1.4.4.2" evidence="1"/>
<dbReference type="EMBL" id="AE000512">
    <property type="protein sequence ID" value="AAD35306.1"/>
    <property type="molecule type" value="Genomic_DNA"/>
</dbReference>
<dbReference type="PIR" id="H72403">
    <property type="entry name" value="H72403"/>
</dbReference>
<dbReference type="RefSeq" id="NP_228029.1">
    <property type="nucleotide sequence ID" value="NC_000853.1"/>
</dbReference>
<dbReference type="RefSeq" id="WP_004082890.1">
    <property type="nucleotide sequence ID" value="NC_000853.1"/>
</dbReference>
<dbReference type="SMR" id="Q9WY57"/>
<dbReference type="FunCoup" id="Q9WY57">
    <property type="interactions" value="59"/>
</dbReference>
<dbReference type="STRING" id="243274.TM_0214"/>
<dbReference type="PaxDb" id="243274-THEMA_03655"/>
<dbReference type="EnsemblBacteria" id="AAD35306">
    <property type="protein sequence ID" value="AAD35306"/>
    <property type="gene ID" value="TM_0214"/>
</dbReference>
<dbReference type="KEGG" id="tma:TM0214"/>
<dbReference type="KEGG" id="tmi:THEMA_03655"/>
<dbReference type="KEGG" id="tmm:Tmari_0212"/>
<dbReference type="KEGG" id="tmw:THMA_0221"/>
<dbReference type="eggNOG" id="COG1003">
    <property type="taxonomic scope" value="Bacteria"/>
</dbReference>
<dbReference type="InParanoid" id="Q9WY57"/>
<dbReference type="OrthoDB" id="9801272at2"/>
<dbReference type="Proteomes" id="UP000008183">
    <property type="component" value="Chromosome"/>
</dbReference>
<dbReference type="GO" id="GO:0005829">
    <property type="term" value="C:cytosol"/>
    <property type="evidence" value="ECO:0000318"/>
    <property type="project" value="GO_Central"/>
</dbReference>
<dbReference type="GO" id="GO:0005960">
    <property type="term" value="C:glycine cleavage complex"/>
    <property type="evidence" value="ECO:0000318"/>
    <property type="project" value="GO_Central"/>
</dbReference>
<dbReference type="GO" id="GO:0016594">
    <property type="term" value="F:glycine binding"/>
    <property type="evidence" value="ECO:0000318"/>
    <property type="project" value="GO_Central"/>
</dbReference>
<dbReference type="GO" id="GO:0004375">
    <property type="term" value="F:glycine dehydrogenase (decarboxylating) activity"/>
    <property type="evidence" value="ECO:0000318"/>
    <property type="project" value="GO_Central"/>
</dbReference>
<dbReference type="GO" id="GO:0030170">
    <property type="term" value="F:pyridoxal phosphate binding"/>
    <property type="evidence" value="ECO:0000318"/>
    <property type="project" value="GO_Central"/>
</dbReference>
<dbReference type="GO" id="GO:0019464">
    <property type="term" value="P:glycine decarboxylation via glycine cleavage system"/>
    <property type="evidence" value="ECO:0000318"/>
    <property type="project" value="GO_Central"/>
</dbReference>
<dbReference type="CDD" id="cd00613">
    <property type="entry name" value="GDC-P"/>
    <property type="match status" value="1"/>
</dbReference>
<dbReference type="FunFam" id="3.40.640.10:FF:000034">
    <property type="entry name" value="Probable glycine dehydrogenase (decarboxylating) subunit 2"/>
    <property type="match status" value="1"/>
</dbReference>
<dbReference type="FunFam" id="3.90.1150.10:FF:000014">
    <property type="entry name" value="Probable glycine dehydrogenase (decarboxylating) subunit 2"/>
    <property type="match status" value="1"/>
</dbReference>
<dbReference type="Gene3D" id="6.20.440.10">
    <property type="match status" value="1"/>
</dbReference>
<dbReference type="Gene3D" id="3.90.1150.10">
    <property type="entry name" value="Aspartate Aminotransferase, domain 1"/>
    <property type="match status" value="1"/>
</dbReference>
<dbReference type="Gene3D" id="3.40.640.10">
    <property type="entry name" value="Type I PLP-dependent aspartate aminotransferase-like (Major domain)"/>
    <property type="match status" value="1"/>
</dbReference>
<dbReference type="HAMAP" id="MF_00713">
    <property type="entry name" value="GcvPB"/>
    <property type="match status" value="1"/>
</dbReference>
<dbReference type="InterPro" id="IPR023012">
    <property type="entry name" value="GcvPB"/>
</dbReference>
<dbReference type="InterPro" id="IPR049316">
    <property type="entry name" value="GDC-P_C"/>
</dbReference>
<dbReference type="InterPro" id="IPR049315">
    <property type="entry name" value="GDC-P_N"/>
</dbReference>
<dbReference type="InterPro" id="IPR020581">
    <property type="entry name" value="GDC_P"/>
</dbReference>
<dbReference type="InterPro" id="IPR015424">
    <property type="entry name" value="PyrdxlP-dep_Trfase"/>
</dbReference>
<dbReference type="InterPro" id="IPR015421">
    <property type="entry name" value="PyrdxlP-dep_Trfase_major"/>
</dbReference>
<dbReference type="InterPro" id="IPR015422">
    <property type="entry name" value="PyrdxlP-dep_Trfase_small"/>
</dbReference>
<dbReference type="NCBIfam" id="NF003346">
    <property type="entry name" value="PRK04366.1"/>
    <property type="match status" value="1"/>
</dbReference>
<dbReference type="PANTHER" id="PTHR11773:SF1">
    <property type="entry name" value="GLYCINE DEHYDROGENASE (DECARBOXYLATING), MITOCHONDRIAL"/>
    <property type="match status" value="1"/>
</dbReference>
<dbReference type="PANTHER" id="PTHR11773">
    <property type="entry name" value="GLYCINE DEHYDROGENASE, DECARBOXYLATING"/>
    <property type="match status" value="1"/>
</dbReference>
<dbReference type="Pfam" id="PF21478">
    <property type="entry name" value="GcvP2_C"/>
    <property type="match status" value="1"/>
</dbReference>
<dbReference type="Pfam" id="PF02347">
    <property type="entry name" value="GDC-P"/>
    <property type="match status" value="1"/>
</dbReference>
<dbReference type="SUPFAM" id="SSF53383">
    <property type="entry name" value="PLP-dependent transferases"/>
    <property type="match status" value="1"/>
</dbReference>